<dbReference type="EMBL" id="BA000004">
    <property type="protein sequence ID" value="BAB06014.1"/>
    <property type="molecule type" value="Genomic_DNA"/>
</dbReference>
<dbReference type="PIR" id="G83936">
    <property type="entry name" value="G83936"/>
</dbReference>
<dbReference type="RefSeq" id="WP_010898451.1">
    <property type="nucleotide sequence ID" value="NC_002570.2"/>
</dbReference>
<dbReference type="STRING" id="272558.gene:10728193"/>
<dbReference type="GeneID" id="87597835"/>
<dbReference type="KEGG" id="bha:BH2295"/>
<dbReference type="eggNOG" id="ENOG5030D9Q">
    <property type="taxonomic scope" value="Bacteria"/>
</dbReference>
<dbReference type="HOGENOM" id="CLU_216714_0_0_9"/>
<dbReference type="OrthoDB" id="2455637at2"/>
<dbReference type="Proteomes" id="UP000001258">
    <property type="component" value="Chromosome"/>
</dbReference>
<dbReference type="GO" id="GO:0042601">
    <property type="term" value="C:endospore-forming forespore"/>
    <property type="evidence" value="ECO:0007669"/>
    <property type="project" value="InterPro"/>
</dbReference>
<dbReference type="GO" id="GO:0030436">
    <property type="term" value="P:asexual sporulation"/>
    <property type="evidence" value="ECO:0007669"/>
    <property type="project" value="UniProtKB-UniRule"/>
</dbReference>
<dbReference type="GO" id="GO:0030435">
    <property type="term" value="P:sporulation resulting in formation of a cellular spore"/>
    <property type="evidence" value="ECO:0007669"/>
    <property type="project" value="UniProtKB-KW"/>
</dbReference>
<dbReference type="HAMAP" id="MF_01505">
    <property type="entry name" value="SspN"/>
    <property type="match status" value="1"/>
</dbReference>
<dbReference type="InterPro" id="IPR012612">
    <property type="entry name" value="SASP_SspN"/>
</dbReference>
<dbReference type="NCBIfam" id="NF006904">
    <property type="entry name" value="PRK09398.1"/>
    <property type="match status" value="1"/>
</dbReference>
<dbReference type="Pfam" id="PF08177">
    <property type="entry name" value="SspN"/>
    <property type="match status" value="1"/>
</dbReference>
<protein>
    <recommendedName>
        <fullName evidence="1">Small, acid-soluble spore protein N</fullName>
        <shortName evidence="1">SASP N</shortName>
    </recommendedName>
</protein>
<reference key="1">
    <citation type="journal article" date="2000" name="Nucleic Acids Res.">
        <title>Complete genome sequence of the alkaliphilic bacterium Bacillus halodurans and genomic sequence comparison with Bacillus subtilis.</title>
        <authorList>
            <person name="Takami H."/>
            <person name="Nakasone K."/>
            <person name="Takaki Y."/>
            <person name="Maeno G."/>
            <person name="Sasaki R."/>
            <person name="Masui N."/>
            <person name="Fuji F."/>
            <person name="Hirama C."/>
            <person name="Nakamura Y."/>
            <person name="Ogasawara N."/>
            <person name="Kuhara S."/>
            <person name="Horikoshi K."/>
        </authorList>
    </citation>
    <scope>NUCLEOTIDE SEQUENCE [LARGE SCALE GENOMIC DNA]</scope>
    <source>
        <strain>ATCC BAA-125 / DSM 18197 / FERM 7344 / JCM 9153 / C-125</strain>
    </source>
</reference>
<comment type="subcellular location">
    <subcellularLocation>
        <location evidence="1">Spore core</location>
    </subcellularLocation>
</comment>
<comment type="induction">
    <text evidence="1">Expressed only in the forespore compartment of sporulating cells.</text>
</comment>
<comment type="similarity">
    <text evidence="1">Belongs to the SspN family.</text>
</comment>
<proteinExistence type="inferred from homology"/>
<organism>
    <name type="scientific">Halalkalibacterium halodurans (strain ATCC BAA-125 / DSM 18197 / FERM 7344 / JCM 9153 / C-125)</name>
    <name type="common">Bacillus halodurans</name>
    <dbReference type="NCBI Taxonomy" id="272558"/>
    <lineage>
        <taxon>Bacteria</taxon>
        <taxon>Bacillati</taxon>
        <taxon>Bacillota</taxon>
        <taxon>Bacilli</taxon>
        <taxon>Bacillales</taxon>
        <taxon>Bacillaceae</taxon>
        <taxon>Halalkalibacterium (ex Joshi et al. 2022)</taxon>
    </lineage>
</organism>
<accession>Q9KAJ2</accession>
<gene>
    <name evidence="1" type="primary">sspN</name>
    <name type="ordered locus">BH2295</name>
</gene>
<sequence>MAKMKHGSAQFRPDHLGTQPRKSDANKGKKMNTKGNENPQYIPPKG</sequence>
<feature type="chain" id="PRO_0000221469" description="Small, acid-soluble spore protein N">
    <location>
        <begin position="1"/>
        <end position="46"/>
    </location>
</feature>
<feature type="region of interest" description="Disordered" evidence="2">
    <location>
        <begin position="1"/>
        <end position="46"/>
    </location>
</feature>
<name>SSPN_HALH5</name>
<keyword id="KW-1185">Reference proteome</keyword>
<keyword id="KW-0749">Sporulation</keyword>
<evidence type="ECO:0000255" key="1">
    <source>
        <dbReference type="HAMAP-Rule" id="MF_01505"/>
    </source>
</evidence>
<evidence type="ECO:0000256" key="2">
    <source>
        <dbReference type="SAM" id="MobiDB-lite"/>
    </source>
</evidence>